<dbReference type="EC" id="3.4.25.2" evidence="1"/>
<dbReference type="EMBL" id="AP008229">
    <property type="protein sequence ID" value="BAE70519.1"/>
    <property type="molecule type" value="Genomic_DNA"/>
</dbReference>
<dbReference type="RefSeq" id="WP_011260360.1">
    <property type="nucleotide sequence ID" value="NC_007705.1"/>
</dbReference>
<dbReference type="SMR" id="Q2NYV8"/>
<dbReference type="MEROPS" id="T01.006"/>
<dbReference type="KEGG" id="xom:XOO3764"/>
<dbReference type="HOGENOM" id="CLU_093872_1_0_6"/>
<dbReference type="GO" id="GO:0009376">
    <property type="term" value="C:HslUV protease complex"/>
    <property type="evidence" value="ECO:0007669"/>
    <property type="project" value="UniProtKB-UniRule"/>
</dbReference>
<dbReference type="GO" id="GO:0005839">
    <property type="term" value="C:proteasome core complex"/>
    <property type="evidence" value="ECO:0007669"/>
    <property type="project" value="InterPro"/>
</dbReference>
<dbReference type="GO" id="GO:0046872">
    <property type="term" value="F:metal ion binding"/>
    <property type="evidence" value="ECO:0007669"/>
    <property type="project" value="UniProtKB-KW"/>
</dbReference>
<dbReference type="GO" id="GO:0004298">
    <property type="term" value="F:threonine-type endopeptidase activity"/>
    <property type="evidence" value="ECO:0007669"/>
    <property type="project" value="UniProtKB-KW"/>
</dbReference>
<dbReference type="GO" id="GO:0051603">
    <property type="term" value="P:proteolysis involved in protein catabolic process"/>
    <property type="evidence" value="ECO:0007669"/>
    <property type="project" value="InterPro"/>
</dbReference>
<dbReference type="FunFam" id="3.60.20.10:FF:000002">
    <property type="entry name" value="ATP-dependent protease subunit HslV"/>
    <property type="match status" value="1"/>
</dbReference>
<dbReference type="Gene3D" id="3.60.20.10">
    <property type="entry name" value="Glutamine Phosphoribosylpyrophosphate, subunit 1, domain 1"/>
    <property type="match status" value="1"/>
</dbReference>
<dbReference type="HAMAP" id="MF_00248">
    <property type="entry name" value="HslV"/>
    <property type="match status" value="1"/>
</dbReference>
<dbReference type="InterPro" id="IPR022281">
    <property type="entry name" value="ATP-dep_Prtase_HsIV_su"/>
</dbReference>
<dbReference type="InterPro" id="IPR029055">
    <property type="entry name" value="Ntn_hydrolases_N"/>
</dbReference>
<dbReference type="InterPro" id="IPR001353">
    <property type="entry name" value="Proteasome_sua/b"/>
</dbReference>
<dbReference type="InterPro" id="IPR023333">
    <property type="entry name" value="Proteasome_suB-type"/>
</dbReference>
<dbReference type="NCBIfam" id="TIGR03692">
    <property type="entry name" value="ATP_dep_HslV"/>
    <property type="match status" value="1"/>
</dbReference>
<dbReference type="NCBIfam" id="NF003964">
    <property type="entry name" value="PRK05456.1"/>
    <property type="match status" value="1"/>
</dbReference>
<dbReference type="PANTHER" id="PTHR32194:SF0">
    <property type="entry name" value="ATP-DEPENDENT PROTEASE SUBUNIT HSLV"/>
    <property type="match status" value="1"/>
</dbReference>
<dbReference type="PANTHER" id="PTHR32194">
    <property type="entry name" value="METALLOPROTEASE TLDD"/>
    <property type="match status" value="1"/>
</dbReference>
<dbReference type="Pfam" id="PF00227">
    <property type="entry name" value="Proteasome"/>
    <property type="match status" value="1"/>
</dbReference>
<dbReference type="PIRSF" id="PIRSF039093">
    <property type="entry name" value="HslV"/>
    <property type="match status" value="1"/>
</dbReference>
<dbReference type="SUPFAM" id="SSF56235">
    <property type="entry name" value="N-terminal nucleophile aminohydrolases (Ntn hydrolases)"/>
    <property type="match status" value="1"/>
</dbReference>
<dbReference type="PROSITE" id="PS51476">
    <property type="entry name" value="PROTEASOME_BETA_2"/>
    <property type="match status" value="1"/>
</dbReference>
<organism>
    <name type="scientific">Xanthomonas oryzae pv. oryzae (strain MAFF 311018)</name>
    <dbReference type="NCBI Taxonomy" id="342109"/>
    <lineage>
        <taxon>Bacteria</taxon>
        <taxon>Pseudomonadati</taxon>
        <taxon>Pseudomonadota</taxon>
        <taxon>Gammaproteobacteria</taxon>
        <taxon>Lysobacterales</taxon>
        <taxon>Lysobacteraceae</taxon>
        <taxon>Xanthomonas</taxon>
    </lineage>
</organism>
<protein>
    <recommendedName>
        <fullName evidence="1">ATP-dependent protease subunit HslV</fullName>
        <ecNumber evidence="1">3.4.25.2</ecNumber>
    </recommendedName>
</protein>
<sequence length="183" mass="19308">MDPSQNPNIVHATTIISVRRGGHVAVAGDGQVTLGHTVMKGNARKVRRLGREGQVLAGFAGAAADAFTLFELFEAKLDKHGQLTRAAVELAKDWRTERRLGKLEALLAVADKETSLIISGTGDVIEPEDGIIAIGSGGAYALSAARALLAHTELDAKTIATEAINIAGDICIYTNRNVVVEEL</sequence>
<proteinExistence type="inferred from homology"/>
<accession>Q2NYV8</accession>
<comment type="function">
    <text evidence="1">Protease subunit of a proteasome-like degradation complex believed to be a general protein degrading machinery.</text>
</comment>
<comment type="catalytic activity">
    <reaction evidence="1">
        <text>ATP-dependent cleavage of peptide bonds with broad specificity.</text>
        <dbReference type="EC" id="3.4.25.2"/>
    </reaction>
</comment>
<comment type="activity regulation">
    <text evidence="1">Allosterically activated by HslU binding.</text>
</comment>
<comment type="subunit">
    <text evidence="1">A double ring-shaped homohexamer of HslV is capped on each side by a ring-shaped HslU homohexamer. The assembly of the HslU/HslV complex is dependent on binding of ATP.</text>
</comment>
<comment type="subcellular location">
    <subcellularLocation>
        <location evidence="1">Cytoplasm</location>
    </subcellularLocation>
</comment>
<comment type="similarity">
    <text evidence="1">Belongs to the peptidase T1B family. HslV subfamily.</text>
</comment>
<reference key="1">
    <citation type="journal article" date="2005" name="Jpn. Agric. Res. Q.">
        <title>Genome sequence of Xanthomonas oryzae pv. oryzae suggests contribution of large numbers of effector genes and insertion sequences to its race diversity.</title>
        <authorList>
            <person name="Ochiai H."/>
            <person name="Inoue Y."/>
            <person name="Takeya M."/>
            <person name="Sasaki A."/>
            <person name="Kaku H."/>
        </authorList>
    </citation>
    <scope>NUCLEOTIDE SEQUENCE [LARGE SCALE GENOMIC DNA]</scope>
    <source>
        <strain>MAFF 311018</strain>
    </source>
</reference>
<gene>
    <name evidence="1" type="primary">hslV</name>
    <name type="ordered locus">XOO3764</name>
</gene>
<keyword id="KW-0021">Allosteric enzyme</keyword>
<keyword id="KW-0963">Cytoplasm</keyword>
<keyword id="KW-0378">Hydrolase</keyword>
<keyword id="KW-0479">Metal-binding</keyword>
<keyword id="KW-0645">Protease</keyword>
<keyword id="KW-0915">Sodium</keyword>
<keyword id="KW-0888">Threonine protease</keyword>
<feature type="chain" id="PRO_1000078437" description="ATP-dependent protease subunit HslV">
    <location>
        <begin position="1"/>
        <end position="183"/>
    </location>
</feature>
<feature type="active site" evidence="1">
    <location>
        <position position="13"/>
    </location>
</feature>
<feature type="binding site" evidence="1">
    <location>
        <position position="168"/>
    </location>
    <ligand>
        <name>Na(+)</name>
        <dbReference type="ChEBI" id="CHEBI:29101"/>
    </ligand>
</feature>
<feature type="binding site" evidence="1">
    <location>
        <position position="171"/>
    </location>
    <ligand>
        <name>Na(+)</name>
        <dbReference type="ChEBI" id="CHEBI:29101"/>
    </ligand>
</feature>
<feature type="binding site" evidence="1">
    <location>
        <position position="174"/>
    </location>
    <ligand>
        <name>Na(+)</name>
        <dbReference type="ChEBI" id="CHEBI:29101"/>
    </ligand>
</feature>
<evidence type="ECO:0000255" key="1">
    <source>
        <dbReference type="HAMAP-Rule" id="MF_00248"/>
    </source>
</evidence>
<name>HSLV_XANOM</name>